<reference key="1">
    <citation type="journal article" date="2002" name="Nature">
        <title>The genome sequence of Schizosaccharomyces pombe.</title>
        <authorList>
            <person name="Wood V."/>
            <person name="Gwilliam R."/>
            <person name="Rajandream M.A."/>
            <person name="Lyne M.H."/>
            <person name="Lyne R."/>
            <person name="Stewart A."/>
            <person name="Sgouros J.G."/>
            <person name="Peat N."/>
            <person name="Hayles J."/>
            <person name="Baker S.G."/>
            <person name="Basham D."/>
            <person name="Bowman S."/>
            <person name="Brooks K."/>
            <person name="Brown D."/>
            <person name="Brown S."/>
            <person name="Chillingworth T."/>
            <person name="Churcher C.M."/>
            <person name="Collins M."/>
            <person name="Connor R."/>
            <person name="Cronin A."/>
            <person name="Davis P."/>
            <person name="Feltwell T."/>
            <person name="Fraser A."/>
            <person name="Gentles S."/>
            <person name="Goble A."/>
            <person name="Hamlin N."/>
            <person name="Harris D.E."/>
            <person name="Hidalgo J."/>
            <person name="Hodgson G."/>
            <person name="Holroyd S."/>
            <person name="Hornsby T."/>
            <person name="Howarth S."/>
            <person name="Huckle E.J."/>
            <person name="Hunt S."/>
            <person name="Jagels K."/>
            <person name="James K.D."/>
            <person name="Jones L."/>
            <person name="Jones M."/>
            <person name="Leather S."/>
            <person name="McDonald S."/>
            <person name="McLean J."/>
            <person name="Mooney P."/>
            <person name="Moule S."/>
            <person name="Mungall K.L."/>
            <person name="Murphy L.D."/>
            <person name="Niblett D."/>
            <person name="Odell C."/>
            <person name="Oliver K."/>
            <person name="O'Neil S."/>
            <person name="Pearson D."/>
            <person name="Quail M.A."/>
            <person name="Rabbinowitsch E."/>
            <person name="Rutherford K.M."/>
            <person name="Rutter S."/>
            <person name="Saunders D."/>
            <person name="Seeger K."/>
            <person name="Sharp S."/>
            <person name="Skelton J."/>
            <person name="Simmonds M.N."/>
            <person name="Squares R."/>
            <person name="Squares S."/>
            <person name="Stevens K."/>
            <person name="Taylor K."/>
            <person name="Taylor R.G."/>
            <person name="Tivey A."/>
            <person name="Walsh S.V."/>
            <person name="Warren T."/>
            <person name="Whitehead S."/>
            <person name="Woodward J.R."/>
            <person name="Volckaert G."/>
            <person name="Aert R."/>
            <person name="Robben J."/>
            <person name="Grymonprez B."/>
            <person name="Weltjens I."/>
            <person name="Vanstreels E."/>
            <person name="Rieger M."/>
            <person name="Schaefer M."/>
            <person name="Mueller-Auer S."/>
            <person name="Gabel C."/>
            <person name="Fuchs M."/>
            <person name="Duesterhoeft A."/>
            <person name="Fritzc C."/>
            <person name="Holzer E."/>
            <person name="Moestl D."/>
            <person name="Hilbert H."/>
            <person name="Borzym K."/>
            <person name="Langer I."/>
            <person name="Beck A."/>
            <person name="Lehrach H."/>
            <person name="Reinhardt R."/>
            <person name="Pohl T.M."/>
            <person name="Eger P."/>
            <person name="Zimmermann W."/>
            <person name="Wedler H."/>
            <person name="Wambutt R."/>
            <person name="Purnelle B."/>
            <person name="Goffeau A."/>
            <person name="Cadieu E."/>
            <person name="Dreano S."/>
            <person name="Gloux S."/>
            <person name="Lelaure V."/>
            <person name="Mottier S."/>
            <person name="Galibert F."/>
            <person name="Aves S.J."/>
            <person name="Xiang Z."/>
            <person name="Hunt C."/>
            <person name="Moore K."/>
            <person name="Hurst S.M."/>
            <person name="Lucas M."/>
            <person name="Rochet M."/>
            <person name="Gaillardin C."/>
            <person name="Tallada V.A."/>
            <person name="Garzon A."/>
            <person name="Thode G."/>
            <person name="Daga R.R."/>
            <person name="Cruzado L."/>
            <person name="Jimenez J."/>
            <person name="Sanchez M."/>
            <person name="del Rey F."/>
            <person name="Benito J."/>
            <person name="Dominguez A."/>
            <person name="Revuelta J.L."/>
            <person name="Moreno S."/>
            <person name="Armstrong J."/>
            <person name="Forsburg S.L."/>
            <person name="Cerutti L."/>
            <person name="Lowe T."/>
            <person name="McCombie W.R."/>
            <person name="Paulsen I."/>
            <person name="Potashkin J."/>
            <person name="Shpakovski G.V."/>
            <person name="Ussery D."/>
            <person name="Barrell B.G."/>
            <person name="Nurse P."/>
        </authorList>
    </citation>
    <scope>NUCLEOTIDE SEQUENCE [LARGE SCALE GENOMIC DNA]</scope>
    <source>
        <strain>972 / ATCC 24843</strain>
    </source>
</reference>
<reference key="2">
    <citation type="journal article" date="2008" name="J. Proteome Res.">
        <title>Phosphoproteome analysis of fission yeast.</title>
        <authorList>
            <person name="Wilson-Grady J.T."/>
            <person name="Villen J."/>
            <person name="Gygi S.P."/>
        </authorList>
    </citation>
    <scope>PHOSPHORYLATION [LARGE SCALE ANALYSIS] AT SER-260</scope>
    <scope>IDENTIFICATION BY MASS SPECTROMETRY</scope>
</reference>
<feature type="chain" id="PRO_0000116806" description="Uncharacterized protein C737.05">
    <location>
        <begin position="1"/>
        <end position="264"/>
    </location>
</feature>
<feature type="transmembrane region" description="Helical" evidence="1">
    <location>
        <begin position="48"/>
        <end position="68"/>
    </location>
</feature>
<feature type="transmembrane region" description="Helical" evidence="1">
    <location>
        <begin position="112"/>
        <end position="132"/>
    </location>
</feature>
<feature type="transmembrane region" description="Helical" evidence="1">
    <location>
        <begin position="142"/>
        <end position="162"/>
    </location>
</feature>
<feature type="modified residue" description="Phosphoserine" evidence="2">
    <location>
        <position position="260"/>
    </location>
</feature>
<accession>O13679</accession>
<dbReference type="EMBL" id="CU329672">
    <property type="protein sequence ID" value="CAB44773.1"/>
    <property type="molecule type" value="Genomic_DNA"/>
</dbReference>
<dbReference type="PIR" id="T41578">
    <property type="entry name" value="T41578"/>
</dbReference>
<dbReference type="RefSeq" id="NP_588367.1">
    <property type="nucleotide sequence ID" value="NM_001023358.2"/>
</dbReference>
<dbReference type="BioGRID" id="275684">
    <property type="interactions" value="1"/>
</dbReference>
<dbReference type="FunCoup" id="O13679">
    <property type="interactions" value="87"/>
</dbReference>
<dbReference type="STRING" id="284812.O13679"/>
<dbReference type="iPTMnet" id="O13679"/>
<dbReference type="PaxDb" id="4896-SPCC737.05.1"/>
<dbReference type="EnsemblFungi" id="SPCC737.05.1">
    <property type="protein sequence ID" value="SPCC737.05.1:pep"/>
    <property type="gene ID" value="SPCC737.05"/>
</dbReference>
<dbReference type="KEGG" id="spo:2539112"/>
<dbReference type="PomBase" id="SPCC737.05"/>
<dbReference type="VEuPathDB" id="FungiDB:SPCC737.05"/>
<dbReference type="HOGENOM" id="CLU_1066199_0_0_1"/>
<dbReference type="InParanoid" id="O13679"/>
<dbReference type="OMA" id="QNFMASY"/>
<dbReference type="PRO" id="PR:O13679"/>
<dbReference type="Proteomes" id="UP000002485">
    <property type="component" value="Chromosome III"/>
</dbReference>
<dbReference type="GO" id="GO:0005783">
    <property type="term" value="C:endoplasmic reticulum"/>
    <property type="evidence" value="ECO:0007005"/>
    <property type="project" value="PomBase"/>
</dbReference>
<dbReference type="GO" id="GO:0005778">
    <property type="term" value="C:peroxisomal membrane"/>
    <property type="evidence" value="ECO:0000266"/>
    <property type="project" value="PomBase"/>
</dbReference>
<dbReference type="GO" id="GO:0007031">
    <property type="term" value="P:peroxisome organization"/>
    <property type="evidence" value="ECO:0000266"/>
    <property type="project" value="PomBase"/>
</dbReference>
<dbReference type="InterPro" id="IPR052816">
    <property type="entry name" value="Peroxisomal_Membrane_PEX28-32"/>
</dbReference>
<dbReference type="PANTHER" id="PTHR28304">
    <property type="entry name" value="PEROXISOMAL MEMBRANE PROTEIN PEX29"/>
    <property type="match status" value="1"/>
</dbReference>
<dbReference type="PANTHER" id="PTHR28304:SF2">
    <property type="entry name" value="PEROXISOMAL MEMBRANE PROTEIN PEX29"/>
    <property type="match status" value="1"/>
</dbReference>
<organism>
    <name type="scientific">Schizosaccharomyces pombe (strain 972 / ATCC 24843)</name>
    <name type="common">Fission yeast</name>
    <dbReference type="NCBI Taxonomy" id="284812"/>
    <lineage>
        <taxon>Eukaryota</taxon>
        <taxon>Fungi</taxon>
        <taxon>Dikarya</taxon>
        <taxon>Ascomycota</taxon>
        <taxon>Taphrinomycotina</taxon>
        <taxon>Schizosaccharomycetes</taxon>
        <taxon>Schizosaccharomycetales</taxon>
        <taxon>Schizosaccharomycetaceae</taxon>
        <taxon>Schizosaccharomyces</taxon>
    </lineage>
</organism>
<keyword id="KW-0472">Membrane</keyword>
<keyword id="KW-0597">Phosphoprotein</keyword>
<keyword id="KW-1185">Reference proteome</keyword>
<keyword id="KW-0812">Transmembrane</keyword>
<keyword id="KW-1133">Transmembrane helix</keyword>
<sequence>MQNELNPILLSQNSIRFATRVAIFFIIRDELVEAVTWRHPVKSMCLGLTITLLYLHPVSFSAILLLVFLTMMPISMTHDVTTNLKDLQNFMASYSSSYDQLLYFRQNYYHHITPSAISSGLLVSLVLIFLLAYLRISIDRYLPIAIWIGLISLHPKLRSYLIQFYSAKRDHVPYLQIRNELAQVWRHVDISGSQTTTRYTSFPKFNPENSVTSLDLVEPPENYSWAPQSDWTFVPPNEFRRFILWSPQPPKMNRKSSHGSNLPL</sequence>
<name>YJ15_SCHPO</name>
<gene>
    <name type="ORF">SPCC737.05</name>
</gene>
<proteinExistence type="evidence at protein level"/>
<comment type="subcellular location">
    <subcellularLocation>
        <location evidence="3">Membrane</location>
        <topology evidence="3">Multi-pass membrane protein</topology>
    </subcellularLocation>
</comment>
<evidence type="ECO:0000255" key="1"/>
<evidence type="ECO:0000269" key="2">
    <source>
    </source>
</evidence>
<evidence type="ECO:0000305" key="3"/>
<protein>
    <recommendedName>
        <fullName>Uncharacterized protein C737.05</fullName>
    </recommendedName>
</protein>